<protein>
    <recommendedName>
        <fullName>Homeobox protein Hox-B5a</fullName>
        <shortName>Hox-B5</shortName>
    </recommendedName>
    <alternativeName>
        <fullName>Homeobox protein Zf-21</fullName>
    </alternativeName>
</protein>
<keyword id="KW-0217">Developmental protein</keyword>
<keyword id="KW-0238">DNA-binding</keyword>
<keyword id="KW-0371">Homeobox</keyword>
<keyword id="KW-0539">Nucleus</keyword>
<keyword id="KW-1185">Reference proteome</keyword>
<keyword id="KW-0804">Transcription</keyword>
<keyword id="KW-0805">Transcription regulation</keyword>
<dbReference type="EMBL" id="X12802">
    <property type="protein sequence ID" value="CAA31290.1"/>
    <property type="molecule type" value="mRNA"/>
</dbReference>
<dbReference type="EMBL" id="X68248">
    <property type="protein sequence ID" value="CAA48320.1"/>
    <property type="molecule type" value="Genomic_DNA"/>
</dbReference>
<dbReference type="EMBL" id="AL645782">
    <property type="protein sequence ID" value="CAD59114.1"/>
    <property type="molecule type" value="Genomic_DNA"/>
</dbReference>
<dbReference type="EMBL" id="BC071493">
    <property type="protein sequence ID" value="AAH71493.1"/>
    <property type="molecule type" value="mRNA"/>
</dbReference>
<dbReference type="EMBL" id="DQ060540">
    <property type="protein sequence ID" value="AAY67918.1"/>
    <property type="molecule type" value="mRNA"/>
</dbReference>
<dbReference type="EMBL" id="X07381">
    <property type="protein sequence ID" value="CAA30293.1"/>
    <property type="molecule type" value="Genomic_DNA"/>
</dbReference>
<dbReference type="EMBL" id="X07381">
    <property type="protein sequence ID" value="CAA30294.1"/>
    <property type="molecule type" value="Genomic_DNA"/>
</dbReference>
<dbReference type="PIR" id="S03671">
    <property type="entry name" value="WJZFX2"/>
</dbReference>
<dbReference type="RefSeq" id="NP_571176.2">
    <property type="nucleotide sequence ID" value="NM_131101.2"/>
</dbReference>
<dbReference type="SMR" id="P09014"/>
<dbReference type="FunCoup" id="P09014">
    <property type="interactions" value="240"/>
</dbReference>
<dbReference type="STRING" id="7955.ENSDARP00000004270"/>
<dbReference type="PaxDb" id="7955-ENSDARP00000004270"/>
<dbReference type="Ensembl" id="ENSDART00000025449">
    <property type="protein sequence ID" value="ENSDARP00000004270"/>
    <property type="gene ID" value="ENSDARG00000013057"/>
</dbReference>
<dbReference type="GeneID" id="30317"/>
<dbReference type="KEGG" id="dre:30317"/>
<dbReference type="AGR" id="ZFIN:ZDB-GENE-980526-70"/>
<dbReference type="CTD" id="30317"/>
<dbReference type="ZFIN" id="ZDB-GENE-980526-70">
    <property type="gene designation" value="hoxb5a"/>
</dbReference>
<dbReference type="eggNOG" id="KOG0489">
    <property type="taxonomic scope" value="Eukaryota"/>
</dbReference>
<dbReference type="HOGENOM" id="CLU_061398_2_1_1"/>
<dbReference type="InParanoid" id="P09014"/>
<dbReference type="OMA" id="TMHSGTY"/>
<dbReference type="OrthoDB" id="6159439at2759"/>
<dbReference type="PhylomeDB" id="P09014"/>
<dbReference type="TreeFam" id="TF316310"/>
<dbReference type="PRO" id="PR:P09014"/>
<dbReference type="Proteomes" id="UP000000437">
    <property type="component" value="Chromosome 3"/>
</dbReference>
<dbReference type="Bgee" id="ENSDARG00000013057">
    <property type="expression patterns" value="Expressed in spleen and 32 other cell types or tissues"/>
</dbReference>
<dbReference type="GO" id="GO:0005634">
    <property type="term" value="C:nucleus"/>
    <property type="evidence" value="ECO:0000318"/>
    <property type="project" value="GO_Central"/>
</dbReference>
<dbReference type="GO" id="GO:0000981">
    <property type="term" value="F:DNA-binding transcription factor activity, RNA polymerase II-specific"/>
    <property type="evidence" value="ECO:0000318"/>
    <property type="project" value="GO_Central"/>
</dbReference>
<dbReference type="GO" id="GO:0000978">
    <property type="term" value="F:RNA polymerase II cis-regulatory region sequence-specific DNA binding"/>
    <property type="evidence" value="ECO:0000318"/>
    <property type="project" value="GO_Central"/>
</dbReference>
<dbReference type="GO" id="GO:0009952">
    <property type="term" value="P:anterior/posterior pattern specification"/>
    <property type="evidence" value="ECO:0000318"/>
    <property type="project" value="GO_Central"/>
</dbReference>
<dbReference type="GO" id="GO:0007420">
    <property type="term" value="P:brain development"/>
    <property type="evidence" value="ECO:0000315"/>
    <property type="project" value="ZFIN"/>
</dbReference>
<dbReference type="GO" id="GO:0001708">
    <property type="term" value="P:cell fate specification"/>
    <property type="evidence" value="ECO:0000315"/>
    <property type="project" value="ZFIN"/>
</dbReference>
<dbReference type="GO" id="GO:0006357">
    <property type="term" value="P:regulation of transcription by RNA polymerase II"/>
    <property type="evidence" value="ECO:0000318"/>
    <property type="project" value="GO_Central"/>
</dbReference>
<dbReference type="CDD" id="cd00086">
    <property type="entry name" value="homeodomain"/>
    <property type="match status" value="1"/>
</dbReference>
<dbReference type="FunFam" id="1.10.10.60:FF:000055">
    <property type="entry name" value="Homeobox protein Hox-A5"/>
    <property type="match status" value="1"/>
</dbReference>
<dbReference type="Gene3D" id="1.10.10.60">
    <property type="entry name" value="Homeodomain-like"/>
    <property type="match status" value="1"/>
</dbReference>
<dbReference type="InterPro" id="IPR050296">
    <property type="entry name" value="Antp_homeobox"/>
</dbReference>
<dbReference type="InterPro" id="IPR001356">
    <property type="entry name" value="HD"/>
</dbReference>
<dbReference type="InterPro" id="IPR020479">
    <property type="entry name" value="HD_metazoa"/>
</dbReference>
<dbReference type="InterPro" id="IPR017995">
    <property type="entry name" value="Homeobox_antennapedia"/>
</dbReference>
<dbReference type="InterPro" id="IPR001827">
    <property type="entry name" value="Homeobox_Antennapedia_CS"/>
</dbReference>
<dbReference type="InterPro" id="IPR017970">
    <property type="entry name" value="Homeobox_CS"/>
</dbReference>
<dbReference type="InterPro" id="IPR009057">
    <property type="entry name" value="Homeodomain-like_sf"/>
</dbReference>
<dbReference type="PANTHER" id="PTHR45659">
    <property type="entry name" value="HOMEOBOX PROTEIN HOX"/>
    <property type="match status" value="1"/>
</dbReference>
<dbReference type="PANTHER" id="PTHR45659:SF2">
    <property type="entry name" value="HOMEOBOX PROTEIN HOX-B5"/>
    <property type="match status" value="1"/>
</dbReference>
<dbReference type="Pfam" id="PF00046">
    <property type="entry name" value="Homeodomain"/>
    <property type="match status" value="1"/>
</dbReference>
<dbReference type="PRINTS" id="PR00025">
    <property type="entry name" value="ANTENNAPEDIA"/>
</dbReference>
<dbReference type="PRINTS" id="PR00024">
    <property type="entry name" value="HOMEOBOX"/>
</dbReference>
<dbReference type="SMART" id="SM00389">
    <property type="entry name" value="HOX"/>
    <property type="match status" value="1"/>
</dbReference>
<dbReference type="SUPFAM" id="SSF46689">
    <property type="entry name" value="Homeodomain-like"/>
    <property type="match status" value="1"/>
</dbReference>
<dbReference type="PROSITE" id="PS00032">
    <property type="entry name" value="ANTENNAPEDIA"/>
    <property type="match status" value="1"/>
</dbReference>
<dbReference type="PROSITE" id="PS00027">
    <property type="entry name" value="HOMEOBOX_1"/>
    <property type="match status" value="1"/>
</dbReference>
<dbReference type="PROSITE" id="PS50071">
    <property type="entry name" value="HOMEOBOX_2"/>
    <property type="match status" value="1"/>
</dbReference>
<organism>
    <name type="scientific">Danio rerio</name>
    <name type="common">Zebrafish</name>
    <name type="synonym">Brachydanio rerio</name>
    <dbReference type="NCBI Taxonomy" id="7955"/>
    <lineage>
        <taxon>Eukaryota</taxon>
        <taxon>Metazoa</taxon>
        <taxon>Chordata</taxon>
        <taxon>Craniata</taxon>
        <taxon>Vertebrata</taxon>
        <taxon>Euteleostomi</taxon>
        <taxon>Actinopterygii</taxon>
        <taxon>Neopterygii</taxon>
        <taxon>Teleostei</taxon>
        <taxon>Ostariophysi</taxon>
        <taxon>Cypriniformes</taxon>
        <taxon>Danionidae</taxon>
        <taxon>Danioninae</taxon>
        <taxon>Danio</taxon>
    </lineage>
</organism>
<name>HXB5A_DANRE</name>
<comment type="function">
    <text>Sequence-specific transcription factor which is part of a developmental regulatory system that provides cells with specific positional identities on the anterior-posterior axis.</text>
</comment>
<comment type="subcellular location">
    <subcellularLocation>
        <location>Nucleus</location>
    </subcellularLocation>
</comment>
<comment type="developmental stage">
    <text evidence="3 4">First detected at 12.5 hours post-fertilization, continuing through to adult stages. At the 10-somite stage, expressed in the paraxial mesoderm with an anterior expression at somite 1. At the 20-somite stage, expressed within the developing CNS with an anterior expression limit at the anterior-most region of somite 1.</text>
</comment>
<comment type="similarity">
    <text evidence="5">Belongs to the Antp homeobox family.</text>
</comment>
<gene>
    <name type="primary">hoxb5a</name>
    <name type="synonym">hox-b5</name>
    <name type="synonym">hoxb5</name>
    <name type="synonym">zf21</name>
</gene>
<accession>P09014</accession>
<accession>Q4PRA3</accession>
<accession>Q6LBU7</accession>
<accession>Q8AWY7</accession>
<reference key="1">
    <citation type="journal article" date="1988" name="Nucleic Acids Res.">
        <title>Primary structure, developmentally regulated expression and potential duplication of the zebrafish homeobox gene ZF-21.</title>
        <authorList>
            <person name="Njolstad P.R."/>
            <person name="Molven A."/>
            <person name="Hordvik I."/>
            <person name="Apold J."/>
            <person name="Fjose A."/>
        </authorList>
    </citation>
    <scope>NUCLEOTIDE SEQUENCE [MRNA]</scope>
    <scope>DEVELOPMENTAL STAGE</scope>
    <source>
        <tissue>Embryo</tissue>
    </source>
</reference>
<reference key="2">
    <citation type="journal article" date="1993" name="Biochim. Biophys. Acta">
        <title>Sequence analysis of the zebrafish hox-B5/B6 region.</title>
        <authorList>
            <person name="Molven A."/>
            <person name="Hordvik I."/>
            <person name="Njolstad P.R."/>
        </authorList>
    </citation>
    <scope>NUCLEOTIDE SEQUENCE [GENOMIC DNA]</scope>
</reference>
<reference key="3">
    <citation type="journal article" date="2013" name="Nature">
        <title>The zebrafish reference genome sequence and its relationship to the human genome.</title>
        <authorList>
            <person name="Howe K."/>
            <person name="Clark M.D."/>
            <person name="Torroja C.F."/>
            <person name="Torrance J."/>
            <person name="Berthelot C."/>
            <person name="Muffato M."/>
            <person name="Collins J.E."/>
            <person name="Humphray S."/>
            <person name="McLaren K."/>
            <person name="Matthews L."/>
            <person name="McLaren S."/>
            <person name="Sealy I."/>
            <person name="Caccamo M."/>
            <person name="Churcher C."/>
            <person name="Scott C."/>
            <person name="Barrett J.C."/>
            <person name="Koch R."/>
            <person name="Rauch G.J."/>
            <person name="White S."/>
            <person name="Chow W."/>
            <person name="Kilian B."/>
            <person name="Quintais L.T."/>
            <person name="Guerra-Assuncao J.A."/>
            <person name="Zhou Y."/>
            <person name="Gu Y."/>
            <person name="Yen J."/>
            <person name="Vogel J.H."/>
            <person name="Eyre T."/>
            <person name="Redmond S."/>
            <person name="Banerjee R."/>
            <person name="Chi J."/>
            <person name="Fu B."/>
            <person name="Langley E."/>
            <person name="Maguire S.F."/>
            <person name="Laird G.K."/>
            <person name="Lloyd D."/>
            <person name="Kenyon E."/>
            <person name="Donaldson S."/>
            <person name="Sehra H."/>
            <person name="Almeida-King J."/>
            <person name="Loveland J."/>
            <person name="Trevanion S."/>
            <person name="Jones M."/>
            <person name="Quail M."/>
            <person name="Willey D."/>
            <person name="Hunt A."/>
            <person name="Burton J."/>
            <person name="Sims S."/>
            <person name="McLay K."/>
            <person name="Plumb B."/>
            <person name="Davis J."/>
            <person name="Clee C."/>
            <person name="Oliver K."/>
            <person name="Clark R."/>
            <person name="Riddle C."/>
            <person name="Elliot D."/>
            <person name="Threadgold G."/>
            <person name="Harden G."/>
            <person name="Ware D."/>
            <person name="Begum S."/>
            <person name="Mortimore B."/>
            <person name="Kerry G."/>
            <person name="Heath P."/>
            <person name="Phillimore B."/>
            <person name="Tracey A."/>
            <person name="Corby N."/>
            <person name="Dunn M."/>
            <person name="Johnson C."/>
            <person name="Wood J."/>
            <person name="Clark S."/>
            <person name="Pelan S."/>
            <person name="Griffiths G."/>
            <person name="Smith M."/>
            <person name="Glithero R."/>
            <person name="Howden P."/>
            <person name="Barker N."/>
            <person name="Lloyd C."/>
            <person name="Stevens C."/>
            <person name="Harley J."/>
            <person name="Holt K."/>
            <person name="Panagiotidis G."/>
            <person name="Lovell J."/>
            <person name="Beasley H."/>
            <person name="Henderson C."/>
            <person name="Gordon D."/>
            <person name="Auger K."/>
            <person name="Wright D."/>
            <person name="Collins J."/>
            <person name="Raisen C."/>
            <person name="Dyer L."/>
            <person name="Leung K."/>
            <person name="Robertson L."/>
            <person name="Ambridge K."/>
            <person name="Leongamornlert D."/>
            <person name="McGuire S."/>
            <person name="Gilderthorp R."/>
            <person name="Griffiths C."/>
            <person name="Manthravadi D."/>
            <person name="Nichol S."/>
            <person name="Barker G."/>
            <person name="Whitehead S."/>
            <person name="Kay M."/>
            <person name="Brown J."/>
            <person name="Murnane C."/>
            <person name="Gray E."/>
            <person name="Humphries M."/>
            <person name="Sycamore N."/>
            <person name="Barker D."/>
            <person name="Saunders D."/>
            <person name="Wallis J."/>
            <person name="Babbage A."/>
            <person name="Hammond S."/>
            <person name="Mashreghi-Mohammadi M."/>
            <person name="Barr L."/>
            <person name="Martin S."/>
            <person name="Wray P."/>
            <person name="Ellington A."/>
            <person name="Matthews N."/>
            <person name="Ellwood M."/>
            <person name="Woodmansey R."/>
            <person name="Clark G."/>
            <person name="Cooper J."/>
            <person name="Tromans A."/>
            <person name="Grafham D."/>
            <person name="Skuce C."/>
            <person name="Pandian R."/>
            <person name="Andrews R."/>
            <person name="Harrison E."/>
            <person name="Kimberley A."/>
            <person name="Garnett J."/>
            <person name="Fosker N."/>
            <person name="Hall R."/>
            <person name="Garner P."/>
            <person name="Kelly D."/>
            <person name="Bird C."/>
            <person name="Palmer S."/>
            <person name="Gehring I."/>
            <person name="Berger A."/>
            <person name="Dooley C.M."/>
            <person name="Ersan-Urun Z."/>
            <person name="Eser C."/>
            <person name="Geiger H."/>
            <person name="Geisler M."/>
            <person name="Karotki L."/>
            <person name="Kirn A."/>
            <person name="Konantz J."/>
            <person name="Konantz M."/>
            <person name="Oberlander M."/>
            <person name="Rudolph-Geiger S."/>
            <person name="Teucke M."/>
            <person name="Lanz C."/>
            <person name="Raddatz G."/>
            <person name="Osoegawa K."/>
            <person name="Zhu B."/>
            <person name="Rapp A."/>
            <person name="Widaa S."/>
            <person name="Langford C."/>
            <person name="Yang F."/>
            <person name="Schuster S.C."/>
            <person name="Carter N.P."/>
            <person name="Harrow J."/>
            <person name="Ning Z."/>
            <person name="Herrero J."/>
            <person name="Searle S.M."/>
            <person name="Enright A."/>
            <person name="Geisler R."/>
            <person name="Plasterk R.H."/>
            <person name="Lee C."/>
            <person name="Westerfield M."/>
            <person name="de Jong P.J."/>
            <person name="Zon L.I."/>
            <person name="Postlethwait J.H."/>
            <person name="Nusslein-Volhard C."/>
            <person name="Hubbard T.J."/>
            <person name="Roest Crollius H."/>
            <person name="Rogers J."/>
            <person name="Stemple D.L."/>
        </authorList>
    </citation>
    <scope>NUCLEOTIDE SEQUENCE [LARGE SCALE GENOMIC DNA]</scope>
    <source>
        <strain>Tuebingen</strain>
    </source>
</reference>
<reference key="4">
    <citation type="submission" date="2004-06" db="EMBL/GenBank/DDBJ databases">
        <authorList>
            <consortium name="NIH - Zebrafish Gene Collection (ZGC) project"/>
        </authorList>
    </citation>
    <scope>NUCLEOTIDE SEQUENCE [LARGE SCALE MRNA]</scope>
    <source>
        <tissue>Embryo</tissue>
    </source>
</reference>
<reference key="5">
    <citation type="journal article" date="2005" name="Evol. Dev.">
        <title>Genomic annotation and transcriptome analysis of the zebrafish (Danio rerio) hox complex with description of a novel member, hoxb13a.</title>
        <authorList>
            <person name="Corredor-Adamez M."/>
            <person name="Welten M.C.M."/>
            <person name="Spaink H.P."/>
            <person name="Jeffery J.E."/>
            <person name="Schoon R.T."/>
            <person name="de Bakker M.A.G."/>
            <person name="Bagowski C.P."/>
            <person name="Meijer A.H."/>
            <person name="Verbeek F.J."/>
            <person name="Richardson M.K."/>
        </authorList>
    </citation>
    <scope>NUCLEOTIDE SEQUENCE [MRNA] OF 113-201</scope>
    <source>
        <strain>Tuebingen</strain>
    </source>
</reference>
<reference key="6">
    <citation type="journal article" date="1988" name="FEBS Lett.">
        <title>A zebrafish homologue of the murine Hox-2.1 gene.</title>
        <authorList>
            <person name="Njolstad P.R."/>
            <person name="Molven A."/>
            <person name="Fjose A."/>
        </authorList>
    </citation>
    <scope>NUCLEOTIDE SEQUENCE [GENOMIC DNA] OF 195-275</scope>
</reference>
<reference key="7">
    <citation type="journal article" date="1998" name="Development">
        <title>Zebrafish hox genes: genomic organization and modified colinear expression patterns in the trunk.</title>
        <authorList>
            <person name="Prince V.E."/>
            <person name="Joly L."/>
            <person name="Ekker M."/>
            <person name="Ho R.K."/>
        </authorList>
    </citation>
    <scope>DEVELOPMENTAL STAGE</scope>
</reference>
<evidence type="ECO:0000255" key="1">
    <source>
        <dbReference type="PROSITE-ProRule" id="PRU00108"/>
    </source>
</evidence>
<evidence type="ECO:0000256" key="2">
    <source>
        <dbReference type="SAM" id="MobiDB-lite"/>
    </source>
</evidence>
<evidence type="ECO:0000269" key="3">
    <source>
    </source>
</evidence>
<evidence type="ECO:0000269" key="4">
    <source>
    </source>
</evidence>
<evidence type="ECO:0000305" key="5"/>
<feature type="chain" id="PRO_0000200132" description="Homeobox protein Hox-B5a">
    <location>
        <begin position="1"/>
        <end position="275"/>
    </location>
</feature>
<feature type="DNA-binding region" description="Homeobox" evidence="1">
    <location>
        <begin position="200"/>
        <end position="259"/>
    </location>
</feature>
<feature type="region of interest" description="Disordered" evidence="2">
    <location>
        <begin position="70"/>
        <end position="181"/>
    </location>
</feature>
<feature type="short sequence motif" description="Antp-type hexapeptide">
    <location>
        <begin position="182"/>
        <end position="187"/>
    </location>
</feature>
<feature type="compositionally biased region" description="Polar residues" evidence="2">
    <location>
        <begin position="113"/>
        <end position="133"/>
    </location>
</feature>
<feature type="compositionally biased region" description="Polar residues" evidence="2">
    <location>
        <begin position="151"/>
        <end position="164"/>
    </location>
</feature>
<feature type="compositionally biased region" description="Low complexity" evidence="2">
    <location>
        <begin position="165"/>
        <end position="175"/>
    </location>
</feature>
<feature type="sequence conflict" description="In Ref. 1 and 2." evidence="5" ref="1 2">
    <original>LGPKGSSP</original>
    <variation>FGTQRLFA</variation>
    <location>
        <begin position="107"/>
        <end position="114"/>
    </location>
</feature>
<sequence>MSSYFVNSFSGRYPNGPDYQLLNYGTSSSAMNASYRDSGTMHSGSYGYNYNGMDLSVNRSTSTGHFGAVGDNSRVFQSPAPETRFRQPSSCSLASPEPLPCSNSESLGPKGSSPPSDQSTTTAGNNLNSNTHFTEIDEASASSETEEASHRANNSAPRTQQKQETTATSTTSATSDGQAPQIFPWMRKLHISHDMTGPDGKRARTAYTRYQTLELEKEFHFNRYLTRRRRIEIAHALCLSERQIKIWFQNRRMKWKKDNKLKSMSLATAGSAFQP</sequence>
<proteinExistence type="evidence at transcript level"/>